<organismHost>
    <name type="scientific">Homo sapiens</name>
    <name type="common">Human</name>
    <dbReference type="NCBI Taxonomy" id="9606"/>
</organismHost>
<feature type="chain" id="PRO_0000116289" description="Protein U54">
    <location>
        <begin position="1"/>
        <end position="455"/>
    </location>
</feature>
<comment type="similarity">
    <text evidence="1">Belongs to the herpesviridae UL82 family.</text>
</comment>
<protein>
    <recommendedName>
        <fullName>Protein U54</fullName>
    </recommendedName>
</protein>
<sequence length="455" mass="52291">MESCYVVWSSYFLQLKLTAPILLKPREIRCLRTGLSILSQQSTFVCMCRDEGSFTAAYFTYIDLRDCGNVTLAVQNISDVDLDLKQFPLIINLFAFFLPSINLVSLPVQIVERMEHNYIPHGECRAQFILYGSQTKLRAHIKRIRWTELQHEEPTHYMYACEFWIDLQTTPPDQIFNSAKVEFISSRNVYFKQIMLHEKILVIRASYENNYLLNPDNFPSDIFFQVNFIQTIPHIVMERNQEPVMTYDGTCITVGSTKNINSNTTDPFSCTFPTFFDSKQKFAGLFIPRLINGISLNTFTWKERTHLQVTMRAYKKNCRIDYSQELGKLIFLPSQIVTHDQSNIDFGWTETSRILISNQNNQISVFRSETTPVADSPVLSTVPNITAATNVSINLNSLHLNIAKEHLVPVRYRMRTDNLRTFLPITALPHTLTVLEGNIGLQTVPCPSGNRDINA</sequence>
<accession>P52516</accession>
<keyword id="KW-1185">Reference proteome</keyword>
<dbReference type="EMBL" id="U43400">
    <property type="protein sequence ID" value="AAC54716.1"/>
    <property type="molecule type" value="Genomic_DNA"/>
</dbReference>
<dbReference type="PIR" id="T41956">
    <property type="entry name" value="T41956"/>
</dbReference>
<dbReference type="SMR" id="P52516"/>
<dbReference type="Proteomes" id="UP000009246">
    <property type="component" value="Segment"/>
</dbReference>
<dbReference type="InterPro" id="IPR008649">
    <property type="entry name" value="Herpes_UL82/UL83"/>
</dbReference>
<dbReference type="Pfam" id="PF05784">
    <property type="entry name" value="Herpes_UL82_83"/>
    <property type="match status" value="1"/>
</dbReference>
<reference key="1">
    <citation type="journal article" date="1996" name="J. Virol.">
        <title>Determination and analysis of the complete nucleotide sequence of human herpesvirus.</title>
        <authorList>
            <person name="Nicholas J."/>
        </authorList>
    </citation>
    <scope>NUCLEOTIDE SEQUENCE [LARGE SCALE GENOMIC DNA]</scope>
</reference>
<gene>
    <name type="primary">U54</name>
</gene>
<evidence type="ECO:0000305" key="1"/>
<organism>
    <name type="scientific">Human herpesvirus 7 (strain JI)</name>
    <name type="common">HHV-7</name>
    <name type="synonym">Human T lymphotropic virus</name>
    <dbReference type="NCBI Taxonomy" id="57278"/>
    <lineage>
        <taxon>Viruses</taxon>
        <taxon>Duplodnaviria</taxon>
        <taxon>Heunggongvirae</taxon>
        <taxon>Peploviricota</taxon>
        <taxon>Herviviricetes</taxon>
        <taxon>Herpesvirales</taxon>
        <taxon>Orthoherpesviridae</taxon>
        <taxon>Betaherpesvirinae</taxon>
        <taxon>Roseolovirus</taxon>
        <taxon>Roseolovirus humanbeta7</taxon>
        <taxon>Human betaherpesvirus 7</taxon>
    </lineage>
</organism>
<proteinExistence type="inferred from homology"/>
<name>VU54_HHV7J</name>